<feature type="chain" id="PRO_0000289145" description="Beta-defensin 2">
    <location>
        <begin position="1"/>
        <end position="40"/>
    </location>
</feature>
<feature type="disulfide bond" evidence="1">
    <location>
        <begin position="7"/>
        <end position="36"/>
    </location>
</feature>
<feature type="disulfide bond" evidence="1">
    <location>
        <begin position="14"/>
        <end position="29"/>
    </location>
</feature>
<feature type="disulfide bond" evidence="1">
    <location>
        <begin position="19"/>
        <end position="37"/>
    </location>
</feature>
<organism>
    <name type="scientific">Bubalus bubalis</name>
    <name type="common">Domestic water buffalo</name>
    <dbReference type="NCBI Taxonomy" id="89462"/>
    <lineage>
        <taxon>Eukaryota</taxon>
        <taxon>Metazoa</taxon>
        <taxon>Chordata</taxon>
        <taxon>Craniata</taxon>
        <taxon>Vertebrata</taxon>
        <taxon>Euteleostomi</taxon>
        <taxon>Mammalia</taxon>
        <taxon>Eutheria</taxon>
        <taxon>Laurasiatheria</taxon>
        <taxon>Artiodactyla</taxon>
        <taxon>Ruminantia</taxon>
        <taxon>Pecora</taxon>
        <taxon>Bovidae</taxon>
        <taxon>Bovinae</taxon>
        <taxon>Bubalus</taxon>
    </lineage>
</organism>
<comment type="function">
    <text evidence="1">Has bactericidal activity.</text>
</comment>
<comment type="subcellular location">
    <subcellularLocation>
        <location evidence="1">Secreted</location>
    </subcellularLocation>
</comment>
<comment type="similarity">
    <text evidence="2">Belongs to the beta-defensin family.</text>
</comment>
<accession>P85150</accession>
<proteinExistence type="evidence at protein level"/>
<sequence>VRNHVTCRINRGFCVPIRCPGRTRQIGTCFGPRIKCCRSW</sequence>
<name>DEFB2_BUBBU</name>
<dbReference type="SMR" id="P85150"/>
<dbReference type="GO" id="GO:0005576">
    <property type="term" value="C:extracellular region"/>
    <property type="evidence" value="ECO:0007669"/>
    <property type="project" value="UniProtKB-SubCell"/>
</dbReference>
<dbReference type="GO" id="GO:0042742">
    <property type="term" value="P:defense response to bacterium"/>
    <property type="evidence" value="ECO:0007669"/>
    <property type="project" value="UniProtKB-KW"/>
</dbReference>
<dbReference type="FunFam" id="3.10.360.10:FF:000001">
    <property type="entry name" value="Beta-defensin 1"/>
    <property type="match status" value="1"/>
</dbReference>
<dbReference type="Gene3D" id="3.10.360.10">
    <property type="entry name" value="Antimicrobial Peptide, Beta-defensin 2, Chain A"/>
    <property type="match status" value="1"/>
</dbReference>
<dbReference type="InterPro" id="IPR006080">
    <property type="entry name" value="Beta/alpha-defensin_C"/>
</dbReference>
<dbReference type="InterPro" id="IPR001855">
    <property type="entry name" value="Defensin_beta-like"/>
</dbReference>
<dbReference type="Pfam" id="PF00711">
    <property type="entry name" value="Defensin_beta"/>
    <property type="match status" value="1"/>
</dbReference>
<dbReference type="SMART" id="SM00048">
    <property type="entry name" value="DEFSN"/>
    <property type="match status" value="1"/>
</dbReference>
<dbReference type="SUPFAM" id="SSF57392">
    <property type="entry name" value="Defensin-like"/>
    <property type="match status" value="1"/>
</dbReference>
<protein>
    <recommendedName>
        <fullName>Beta-defensin 2</fullName>
    </recommendedName>
</protein>
<keyword id="KW-0044">Antibiotic</keyword>
<keyword id="KW-0929">Antimicrobial</keyword>
<keyword id="KW-0211">Defensin</keyword>
<keyword id="KW-0903">Direct protein sequencing</keyword>
<keyword id="KW-1015">Disulfide bond</keyword>
<keyword id="KW-0964">Secreted</keyword>
<reference evidence="4" key="1">
    <citation type="journal article" date="2008" name="Altern. Lab. Anim.">
        <title>Beta-defensin antibiotic peptides in the innate immunity of the buffalo: in vivo and in vitro studies.</title>
        <authorList>
            <person name="Das H."/>
            <person name="Swamy N."/>
            <person name="Sahoo G."/>
            <person name="Ahmed S.U."/>
            <person name="More T."/>
        </authorList>
    </citation>
    <scope>PROTEIN SEQUENCE</scope>
    <source>
        <tissue evidence="3">Milk</tissue>
    </source>
</reference>
<evidence type="ECO:0000250" key="1">
    <source>
        <dbReference type="UniProtKB" id="P46171"/>
    </source>
</evidence>
<evidence type="ECO:0000255" key="2"/>
<evidence type="ECO:0000269" key="3">
    <source>
    </source>
</evidence>
<evidence type="ECO:0000305" key="4"/>